<gene>
    <name evidence="1" type="primary">rpmH</name>
    <name type="ordered locus">JTY_3984</name>
</gene>
<evidence type="ECO:0000255" key="1">
    <source>
        <dbReference type="HAMAP-Rule" id="MF_00391"/>
    </source>
</evidence>
<evidence type="ECO:0000305" key="2"/>
<organism>
    <name type="scientific">Mycobacterium bovis (strain BCG / Tokyo 172 / ATCC 35737 / TMC 1019)</name>
    <dbReference type="NCBI Taxonomy" id="561275"/>
    <lineage>
        <taxon>Bacteria</taxon>
        <taxon>Bacillati</taxon>
        <taxon>Actinomycetota</taxon>
        <taxon>Actinomycetes</taxon>
        <taxon>Mycobacteriales</taxon>
        <taxon>Mycobacteriaceae</taxon>
        <taxon>Mycobacterium</taxon>
        <taxon>Mycobacterium tuberculosis complex</taxon>
    </lineage>
</organism>
<proteinExistence type="inferred from homology"/>
<name>RL34_MYCBT</name>
<accession>C1AJ64</accession>
<dbReference type="EMBL" id="AP010918">
    <property type="protein sequence ID" value="BAH28252.1"/>
    <property type="molecule type" value="Genomic_DNA"/>
</dbReference>
<dbReference type="RefSeq" id="WP_003400206.1">
    <property type="nucleotide sequence ID" value="NZ_CP014566.1"/>
</dbReference>
<dbReference type="SMR" id="C1AJ64"/>
<dbReference type="GeneID" id="45427924"/>
<dbReference type="KEGG" id="mbt:JTY_3984"/>
<dbReference type="HOGENOM" id="CLU_129938_2_1_11"/>
<dbReference type="GO" id="GO:1990904">
    <property type="term" value="C:ribonucleoprotein complex"/>
    <property type="evidence" value="ECO:0007669"/>
    <property type="project" value="UniProtKB-KW"/>
</dbReference>
<dbReference type="GO" id="GO:0005840">
    <property type="term" value="C:ribosome"/>
    <property type="evidence" value="ECO:0007669"/>
    <property type="project" value="UniProtKB-KW"/>
</dbReference>
<dbReference type="GO" id="GO:0003735">
    <property type="term" value="F:structural constituent of ribosome"/>
    <property type="evidence" value="ECO:0007669"/>
    <property type="project" value="InterPro"/>
</dbReference>
<dbReference type="GO" id="GO:0006412">
    <property type="term" value="P:translation"/>
    <property type="evidence" value="ECO:0007669"/>
    <property type="project" value="UniProtKB-UniRule"/>
</dbReference>
<dbReference type="FunFam" id="1.10.287.3980:FF:000001">
    <property type="entry name" value="Mitochondrial ribosomal protein L34"/>
    <property type="match status" value="1"/>
</dbReference>
<dbReference type="Gene3D" id="1.10.287.3980">
    <property type="match status" value="1"/>
</dbReference>
<dbReference type="HAMAP" id="MF_00391">
    <property type="entry name" value="Ribosomal_bL34"/>
    <property type="match status" value="1"/>
</dbReference>
<dbReference type="InterPro" id="IPR000271">
    <property type="entry name" value="Ribosomal_bL34"/>
</dbReference>
<dbReference type="InterPro" id="IPR020939">
    <property type="entry name" value="Ribosomal_bL34_CS"/>
</dbReference>
<dbReference type="NCBIfam" id="TIGR01030">
    <property type="entry name" value="rpmH_bact"/>
    <property type="match status" value="1"/>
</dbReference>
<dbReference type="PANTHER" id="PTHR14503:SF4">
    <property type="entry name" value="LARGE RIBOSOMAL SUBUNIT PROTEIN BL34M"/>
    <property type="match status" value="1"/>
</dbReference>
<dbReference type="PANTHER" id="PTHR14503">
    <property type="entry name" value="MITOCHONDRIAL RIBOSOMAL PROTEIN 34 FAMILY MEMBER"/>
    <property type="match status" value="1"/>
</dbReference>
<dbReference type="Pfam" id="PF00468">
    <property type="entry name" value="Ribosomal_L34"/>
    <property type="match status" value="1"/>
</dbReference>
<dbReference type="PROSITE" id="PS00784">
    <property type="entry name" value="RIBOSOMAL_L34"/>
    <property type="match status" value="1"/>
</dbReference>
<comment type="similarity">
    <text evidence="1">Belongs to the bacterial ribosomal protein bL34 family.</text>
</comment>
<sequence length="47" mass="5625">MTKGKRTFQPNNRRRARVHGFRLRMRTRAGRSIVSSRRRKGRRTLSA</sequence>
<keyword id="KW-0687">Ribonucleoprotein</keyword>
<keyword id="KW-0689">Ribosomal protein</keyword>
<protein>
    <recommendedName>
        <fullName evidence="1">Large ribosomal subunit protein bL34</fullName>
    </recommendedName>
    <alternativeName>
        <fullName evidence="2">50S ribosomal protein L34</fullName>
    </alternativeName>
</protein>
<reference key="1">
    <citation type="journal article" date="2009" name="Vaccine">
        <title>Whole genome sequence analysis of Mycobacterium bovis bacillus Calmette-Guerin (BCG) Tokyo 172: a comparative study of BCG vaccine substrains.</title>
        <authorList>
            <person name="Seki M."/>
            <person name="Honda I."/>
            <person name="Fujita I."/>
            <person name="Yano I."/>
            <person name="Yamamoto S."/>
            <person name="Koyama A."/>
        </authorList>
    </citation>
    <scope>NUCLEOTIDE SEQUENCE [LARGE SCALE GENOMIC DNA]</scope>
    <source>
        <strain>BCG / Tokyo 172 / ATCC 35737 / TMC 1019</strain>
    </source>
</reference>
<feature type="chain" id="PRO_1000134451" description="Large ribosomal subunit protein bL34">
    <location>
        <begin position="1"/>
        <end position="47"/>
    </location>
</feature>